<reference key="1">
    <citation type="journal article" date="1999" name="DNA Res.">
        <title>Complete genome sequence of an aerobic hyper-thermophilic crenarchaeon, Aeropyrum pernix K1.</title>
        <authorList>
            <person name="Kawarabayasi Y."/>
            <person name="Hino Y."/>
            <person name="Horikawa H."/>
            <person name="Yamazaki S."/>
            <person name="Haikawa Y."/>
            <person name="Jin-no K."/>
            <person name="Takahashi M."/>
            <person name="Sekine M."/>
            <person name="Baba S."/>
            <person name="Ankai A."/>
            <person name="Kosugi H."/>
            <person name="Hosoyama A."/>
            <person name="Fukui S."/>
            <person name="Nagai Y."/>
            <person name="Nishijima K."/>
            <person name="Nakazawa H."/>
            <person name="Takamiya M."/>
            <person name="Masuda S."/>
            <person name="Funahashi T."/>
            <person name="Tanaka T."/>
            <person name="Kudoh Y."/>
            <person name="Yamazaki J."/>
            <person name="Kushida N."/>
            <person name="Oguchi A."/>
            <person name="Aoki K."/>
            <person name="Kubota K."/>
            <person name="Nakamura Y."/>
            <person name="Nomura N."/>
            <person name="Sako Y."/>
            <person name="Kikuchi H."/>
        </authorList>
    </citation>
    <scope>NUCLEOTIDE SEQUENCE [LARGE SCALE GENOMIC DNA]</scope>
    <source>
        <strain>ATCC 700893 / DSM 11879 / JCM 9820 / NBRC 100138 / K1</strain>
    </source>
</reference>
<protein>
    <recommendedName>
        <fullName evidence="1">Dihydroxy-acid dehydratase</fullName>
        <shortName evidence="1">DAD</shortName>
        <ecNumber evidence="1">4.2.1.9</ecNumber>
    </recommendedName>
</protein>
<sequence>MKRPRSRLWYDGLENTPHRVYLRAIGFTSDDFQKPLIAVVAAWSEAGPCNFNVLPGSLRVKEGVRSAGGVPLAVPTIVVNDGINMGTPGMRYSLISRELIADTIEAQVASHGFDGWVGIGGCDKTQPGIMMAMARLDLPSIYIYGGTAEHGVLDGETVTVQSAFEAVGAYLKGLIDEERLYEIEKAAMPTPGTCQGLFTANTMAILAEALGLSPLGSASPPATSSERARELARAGALAVGLVETGLTPRRILTYEAFYNAIVTLMAISGSTNAVLHLLAIAREAGVKLALDDFDEASRKVPVIAALAPAGKYTMVDLHNVGGAPVILRKLLDRGLLYGEAVTVEGVEIGKLLSKWEPRTDYNILYDFDKPYKPHAGLRILRGSLAPRGAVMKIGASGILKFKGAAKVFDSEEEAFKAIERGYVEEGDVVVVRYVGPKGAPGMPEMLKITAAIVGAGLGEKVALITDGRFSGATRGVMVGHAAPEAAVGGPIALVENGDEIVIDGEKGTLDVLLGGDELARRRDKWSPPPLPKQGLLRKYAKLVTQADEGAVTH</sequence>
<accession>Q9YG88</accession>
<evidence type="ECO:0000255" key="1">
    <source>
        <dbReference type="HAMAP-Rule" id="MF_00012"/>
    </source>
</evidence>
<feature type="chain" id="PRO_0000103536" description="Dihydroxy-acid dehydratase">
    <location>
        <begin position="1"/>
        <end position="553"/>
    </location>
</feature>
<feature type="active site" description="Proton acceptor" evidence="1">
    <location>
        <position position="470"/>
    </location>
</feature>
<feature type="binding site" evidence="1">
    <location>
        <position position="49"/>
    </location>
    <ligand>
        <name>[2Fe-2S] cluster</name>
        <dbReference type="ChEBI" id="CHEBI:190135"/>
    </ligand>
</feature>
<feature type="binding site" evidence="1">
    <location>
        <position position="81"/>
    </location>
    <ligand>
        <name>Mg(2+)</name>
        <dbReference type="ChEBI" id="CHEBI:18420"/>
    </ligand>
</feature>
<feature type="binding site" evidence="1">
    <location>
        <position position="122"/>
    </location>
    <ligand>
        <name>[2Fe-2S] cluster</name>
        <dbReference type="ChEBI" id="CHEBI:190135"/>
    </ligand>
</feature>
<feature type="binding site" evidence="1">
    <location>
        <position position="123"/>
    </location>
    <ligand>
        <name>Mg(2+)</name>
        <dbReference type="ChEBI" id="CHEBI:18420"/>
    </ligand>
</feature>
<feature type="binding site" description="via carbamate group" evidence="1">
    <location>
        <position position="124"/>
    </location>
    <ligand>
        <name>Mg(2+)</name>
        <dbReference type="ChEBI" id="CHEBI:18420"/>
    </ligand>
</feature>
<feature type="binding site" evidence="1">
    <location>
        <position position="194"/>
    </location>
    <ligand>
        <name>[2Fe-2S] cluster</name>
        <dbReference type="ChEBI" id="CHEBI:190135"/>
    </ligand>
</feature>
<feature type="binding site" evidence="1">
    <location>
        <position position="444"/>
    </location>
    <ligand>
        <name>Mg(2+)</name>
        <dbReference type="ChEBI" id="CHEBI:18420"/>
    </ligand>
</feature>
<feature type="modified residue" description="N6-carboxylysine" evidence="1">
    <location>
        <position position="124"/>
    </location>
</feature>
<proteinExistence type="inferred from homology"/>
<keyword id="KW-0001">2Fe-2S</keyword>
<keyword id="KW-0028">Amino-acid biosynthesis</keyword>
<keyword id="KW-0100">Branched-chain amino acid biosynthesis</keyword>
<keyword id="KW-0408">Iron</keyword>
<keyword id="KW-0411">Iron-sulfur</keyword>
<keyword id="KW-0456">Lyase</keyword>
<keyword id="KW-0460">Magnesium</keyword>
<keyword id="KW-0479">Metal-binding</keyword>
<keyword id="KW-1185">Reference proteome</keyword>
<name>ILVD_AERPE</name>
<dbReference type="EC" id="4.2.1.9" evidence="1"/>
<dbReference type="EMBL" id="BA000002">
    <property type="protein sequence ID" value="BAA78922.2"/>
    <property type="molecule type" value="Genomic_DNA"/>
</dbReference>
<dbReference type="PIR" id="H72752">
    <property type="entry name" value="H72752"/>
</dbReference>
<dbReference type="SMR" id="Q9YG88"/>
<dbReference type="STRING" id="272557.APE_0013.1"/>
<dbReference type="EnsemblBacteria" id="BAA78922">
    <property type="protein sequence ID" value="BAA78922"/>
    <property type="gene ID" value="APE_0013.1"/>
</dbReference>
<dbReference type="KEGG" id="ape:APE_0013.1"/>
<dbReference type="PATRIC" id="fig|272557.25.peg.7"/>
<dbReference type="eggNOG" id="arCOG04045">
    <property type="taxonomic scope" value="Archaea"/>
</dbReference>
<dbReference type="UniPathway" id="UPA00047">
    <property type="reaction ID" value="UER00057"/>
</dbReference>
<dbReference type="UniPathway" id="UPA00049">
    <property type="reaction ID" value="UER00061"/>
</dbReference>
<dbReference type="Proteomes" id="UP000002518">
    <property type="component" value="Chromosome"/>
</dbReference>
<dbReference type="GO" id="GO:0051537">
    <property type="term" value="F:2 iron, 2 sulfur cluster binding"/>
    <property type="evidence" value="ECO:0007669"/>
    <property type="project" value="UniProtKB-UniRule"/>
</dbReference>
<dbReference type="GO" id="GO:0004160">
    <property type="term" value="F:dihydroxy-acid dehydratase activity"/>
    <property type="evidence" value="ECO:0007669"/>
    <property type="project" value="UniProtKB-UniRule"/>
</dbReference>
<dbReference type="GO" id="GO:0000287">
    <property type="term" value="F:magnesium ion binding"/>
    <property type="evidence" value="ECO:0007669"/>
    <property type="project" value="UniProtKB-UniRule"/>
</dbReference>
<dbReference type="GO" id="GO:0009097">
    <property type="term" value="P:isoleucine biosynthetic process"/>
    <property type="evidence" value="ECO:0007669"/>
    <property type="project" value="UniProtKB-UniRule"/>
</dbReference>
<dbReference type="GO" id="GO:0009099">
    <property type="term" value="P:L-valine biosynthetic process"/>
    <property type="evidence" value="ECO:0007669"/>
    <property type="project" value="UniProtKB-UniRule"/>
</dbReference>
<dbReference type="FunFam" id="3.50.30.80:FF:000001">
    <property type="entry name" value="Dihydroxy-acid dehydratase"/>
    <property type="match status" value="1"/>
</dbReference>
<dbReference type="Gene3D" id="3.50.30.80">
    <property type="entry name" value="IlvD/EDD C-terminal domain-like"/>
    <property type="match status" value="1"/>
</dbReference>
<dbReference type="HAMAP" id="MF_00012">
    <property type="entry name" value="IlvD"/>
    <property type="match status" value="1"/>
</dbReference>
<dbReference type="InterPro" id="IPR050165">
    <property type="entry name" value="DHAD_IlvD/Edd"/>
</dbReference>
<dbReference type="InterPro" id="IPR042096">
    <property type="entry name" value="Dihydro-acid_dehy_C"/>
</dbReference>
<dbReference type="InterPro" id="IPR004404">
    <property type="entry name" value="DihydroxyA_deHydtase"/>
</dbReference>
<dbReference type="InterPro" id="IPR020558">
    <property type="entry name" value="DiOHA_6PGluconate_deHydtase_CS"/>
</dbReference>
<dbReference type="InterPro" id="IPR056740">
    <property type="entry name" value="ILV_EDD_C"/>
</dbReference>
<dbReference type="InterPro" id="IPR000581">
    <property type="entry name" value="ILV_EDD_N"/>
</dbReference>
<dbReference type="InterPro" id="IPR037237">
    <property type="entry name" value="IlvD/EDD_N"/>
</dbReference>
<dbReference type="NCBIfam" id="TIGR00110">
    <property type="entry name" value="ilvD"/>
    <property type="match status" value="1"/>
</dbReference>
<dbReference type="NCBIfam" id="NF002068">
    <property type="entry name" value="PRK00911.1"/>
    <property type="match status" value="1"/>
</dbReference>
<dbReference type="PANTHER" id="PTHR21000">
    <property type="entry name" value="DIHYDROXY-ACID DEHYDRATASE DAD"/>
    <property type="match status" value="1"/>
</dbReference>
<dbReference type="PANTHER" id="PTHR21000:SF5">
    <property type="entry name" value="DIHYDROXY-ACID DEHYDRATASE, MITOCHONDRIAL"/>
    <property type="match status" value="1"/>
</dbReference>
<dbReference type="Pfam" id="PF24877">
    <property type="entry name" value="ILV_EDD_C"/>
    <property type="match status" value="1"/>
</dbReference>
<dbReference type="Pfam" id="PF00920">
    <property type="entry name" value="ILVD_EDD_N"/>
    <property type="match status" value="1"/>
</dbReference>
<dbReference type="SUPFAM" id="SSF143975">
    <property type="entry name" value="IlvD/EDD N-terminal domain-like"/>
    <property type="match status" value="1"/>
</dbReference>
<dbReference type="SUPFAM" id="SSF52016">
    <property type="entry name" value="LeuD/IlvD-like"/>
    <property type="match status" value="1"/>
</dbReference>
<dbReference type="PROSITE" id="PS00886">
    <property type="entry name" value="ILVD_EDD_1"/>
    <property type="match status" value="1"/>
</dbReference>
<dbReference type="PROSITE" id="PS00887">
    <property type="entry name" value="ILVD_EDD_2"/>
    <property type="match status" value="1"/>
</dbReference>
<comment type="function">
    <text evidence="1">Functions in the biosynthesis of branched-chain amino acids. Catalyzes the dehydration of (2R,3R)-2,3-dihydroxy-3-methylpentanoate (2,3-dihydroxy-3-methylvalerate) into 2-oxo-3-methylpentanoate (2-oxo-3-methylvalerate) and of (2R)-2,3-dihydroxy-3-methylbutanoate (2,3-dihydroxyisovalerate) into 2-oxo-3-methylbutanoate (2-oxoisovalerate), the penultimate precursor to L-isoleucine and L-valine, respectively.</text>
</comment>
<comment type="catalytic activity">
    <reaction evidence="1">
        <text>(2R)-2,3-dihydroxy-3-methylbutanoate = 3-methyl-2-oxobutanoate + H2O</text>
        <dbReference type="Rhea" id="RHEA:24809"/>
        <dbReference type="ChEBI" id="CHEBI:11851"/>
        <dbReference type="ChEBI" id="CHEBI:15377"/>
        <dbReference type="ChEBI" id="CHEBI:49072"/>
        <dbReference type="EC" id="4.2.1.9"/>
    </reaction>
    <physiologicalReaction direction="left-to-right" evidence="1">
        <dbReference type="Rhea" id="RHEA:24810"/>
    </physiologicalReaction>
</comment>
<comment type="catalytic activity">
    <reaction evidence="1">
        <text>(2R,3R)-2,3-dihydroxy-3-methylpentanoate = (S)-3-methyl-2-oxopentanoate + H2O</text>
        <dbReference type="Rhea" id="RHEA:27694"/>
        <dbReference type="ChEBI" id="CHEBI:15377"/>
        <dbReference type="ChEBI" id="CHEBI:35146"/>
        <dbReference type="ChEBI" id="CHEBI:49258"/>
        <dbReference type="EC" id="4.2.1.9"/>
    </reaction>
    <physiologicalReaction direction="left-to-right" evidence="1">
        <dbReference type="Rhea" id="RHEA:27695"/>
    </physiologicalReaction>
</comment>
<comment type="cofactor">
    <cofactor evidence="1">
        <name>[2Fe-2S] cluster</name>
        <dbReference type="ChEBI" id="CHEBI:190135"/>
    </cofactor>
    <text evidence="1">Binds 1 [2Fe-2S] cluster per subunit. This cluster acts as a Lewis acid cofactor.</text>
</comment>
<comment type="cofactor">
    <cofactor evidence="1">
        <name>Mg(2+)</name>
        <dbReference type="ChEBI" id="CHEBI:18420"/>
    </cofactor>
</comment>
<comment type="pathway">
    <text evidence="1">Amino-acid biosynthesis; L-isoleucine biosynthesis; L-isoleucine from 2-oxobutanoate: step 3/4.</text>
</comment>
<comment type="pathway">
    <text evidence="1">Amino-acid biosynthesis; L-valine biosynthesis; L-valine from pyruvate: step 3/4.</text>
</comment>
<comment type="subunit">
    <text evidence="1">Homodimer.</text>
</comment>
<comment type="similarity">
    <text evidence="1">Belongs to the IlvD/Edd family.</text>
</comment>
<gene>
    <name evidence="1" type="primary">ilvD</name>
    <name type="ordered locus">APE_0013.1</name>
</gene>
<organism>
    <name type="scientific">Aeropyrum pernix (strain ATCC 700893 / DSM 11879 / JCM 9820 / NBRC 100138 / K1)</name>
    <dbReference type="NCBI Taxonomy" id="272557"/>
    <lineage>
        <taxon>Archaea</taxon>
        <taxon>Thermoproteota</taxon>
        <taxon>Thermoprotei</taxon>
        <taxon>Desulfurococcales</taxon>
        <taxon>Desulfurococcaceae</taxon>
        <taxon>Aeropyrum</taxon>
    </lineage>
</organism>